<keyword id="KW-1003">Cell membrane</keyword>
<keyword id="KW-1015">Disulfide bond</keyword>
<keyword id="KW-0325">Glycoprotein</keyword>
<keyword id="KW-0472">Membrane</keyword>
<keyword id="KW-0675">Receptor</keyword>
<keyword id="KW-1185">Reference proteome</keyword>
<keyword id="KW-0732">Signal</keyword>
<keyword id="KW-0812">Transmembrane</keyword>
<keyword id="KW-1133">Transmembrane helix</keyword>
<organism>
    <name type="scientific">Rattus norvegicus</name>
    <name type="common">Rat</name>
    <dbReference type="NCBI Taxonomy" id="10116"/>
    <lineage>
        <taxon>Eukaryota</taxon>
        <taxon>Metazoa</taxon>
        <taxon>Chordata</taxon>
        <taxon>Craniata</taxon>
        <taxon>Vertebrata</taxon>
        <taxon>Euteleostomi</taxon>
        <taxon>Mammalia</taxon>
        <taxon>Eutheria</taxon>
        <taxon>Euarchontoglires</taxon>
        <taxon>Glires</taxon>
        <taxon>Rodentia</taxon>
        <taxon>Myomorpha</taxon>
        <taxon>Muroidea</taxon>
        <taxon>Muridae</taxon>
        <taxon>Murinae</taxon>
        <taxon>Rattus</taxon>
    </lineage>
</organism>
<comment type="function">
    <text evidence="2">Component of the pre-T-cell receptor complex (composed of PTCRA, TCRB and the CD3 complex) that has a crucial role in early T-cell development, particularly alpha-beta T cell differentiation.</text>
</comment>
<comment type="subunit">
    <text evidence="2">Heterodimer with TCRB; disulfide linked. This heterodimer assembles with CD3 proteins into a signaling-competent pre-T-cell receptor complex. Interacts with RHBDD1.</text>
</comment>
<comment type="subcellular location">
    <subcellularLocation>
        <location evidence="6">Membrane</location>
        <topology evidence="6">Single-pass type I membrane protein</topology>
    </subcellularLocation>
    <subcellularLocation>
        <location evidence="2">Cell membrane</location>
    </subcellularLocation>
</comment>
<comment type="tissue specificity">
    <text evidence="5">Found in CD45+ but not in the CD45- fetal liver cells.</text>
</comment>
<comment type="sequence caution" evidence="6">
    <conflict type="erroneous gene model prediction">
        <sequence resource="EMBL-CDS" id="EDM18861"/>
    </conflict>
</comment>
<feature type="signal peptide" evidence="3">
    <location>
        <begin position="1"/>
        <end position="16"/>
    </location>
</feature>
<feature type="chain" id="PRO_0000319110" description="Pre T-cell antigen receptor alpha">
    <location>
        <begin position="17"/>
        <end position="199"/>
    </location>
</feature>
<feature type="topological domain" description="Extracellular" evidence="3">
    <location>
        <begin position="17"/>
        <end position="155"/>
    </location>
</feature>
<feature type="transmembrane region" description="Helical" evidence="3">
    <location>
        <begin position="156"/>
        <end position="176"/>
    </location>
</feature>
<feature type="topological domain" description="Cytoplasmic" evidence="3">
    <location>
        <begin position="177"/>
        <end position="199"/>
    </location>
</feature>
<feature type="region of interest" description="Disordered" evidence="4">
    <location>
        <begin position="117"/>
        <end position="139"/>
    </location>
</feature>
<feature type="glycosylation site" description="N-linked (GlcNAc...) asparagine" evidence="3">
    <location>
        <position position="67"/>
    </location>
</feature>
<feature type="glycosylation site" description="N-linked (GlcNAc...) asparagine" evidence="3">
    <location>
        <position position="117"/>
    </location>
</feature>
<feature type="disulfide bond" evidence="1">
    <location>
        <begin position="47"/>
        <end position="107"/>
    </location>
</feature>
<feature type="disulfide bond" description="Interchain (with TCRB)" evidence="1">
    <location>
        <position position="136"/>
    </location>
</feature>
<accession>P0C6B3</accession>
<dbReference type="EMBL" id="CH473987">
    <property type="protein sequence ID" value="EDM18861.1"/>
    <property type="status" value="ALT_SEQ"/>
    <property type="molecule type" value="Genomic_DNA"/>
</dbReference>
<dbReference type="EMBL" id="AF182508">
    <property type="protein sequence ID" value="AAG16904.1"/>
    <property type="molecule type" value="mRNA"/>
</dbReference>
<dbReference type="RefSeq" id="XP_001065627.1">
    <property type="nucleotide sequence ID" value="XM_001065627.4"/>
</dbReference>
<dbReference type="RefSeq" id="XP_003750700.1">
    <property type="nucleotide sequence ID" value="XM_003750652.4"/>
</dbReference>
<dbReference type="SMR" id="P0C6B3"/>
<dbReference type="FunCoup" id="P0C6B3">
    <property type="interactions" value="53"/>
</dbReference>
<dbReference type="STRING" id="10116.ENSRNOP00000069313"/>
<dbReference type="GlyCosmos" id="P0C6B3">
    <property type="glycosylation" value="2 sites, No reported glycans"/>
</dbReference>
<dbReference type="GlyGen" id="P0C6B3">
    <property type="glycosylation" value="2 sites"/>
</dbReference>
<dbReference type="PhosphoSitePlus" id="P0C6B3"/>
<dbReference type="PaxDb" id="10116-ENSRNOP00000059713"/>
<dbReference type="AGR" id="RGD:621388"/>
<dbReference type="RGD" id="621388">
    <property type="gene designation" value="Ptcra"/>
</dbReference>
<dbReference type="VEuPathDB" id="HostDB:ENSRNOG00000042581"/>
<dbReference type="eggNOG" id="ENOG502SAGI">
    <property type="taxonomic scope" value="Eukaryota"/>
</dbReference>
<dbReference type="HOGENOM" id="CLU_099078_0_0_1"/>
<dbReference type="InParanoid" id="P0C6B3"/>
<dbReference type="PhylomeDB" id="P0C6B3"/>
<dbReference type="PRO" id="PR:P0C6B3"/>
<dbReference type="Proteomes" id="UP000002494">
    <property type="component" value="Chromosome 9"/>
</dbReference>
<dbReference type="Proteomes" id="UP000234681">
    <property type="component" value="Chromosome 9"/>
</dbReference>
<dbReference type="Bgee" id="ENSRNOG00000042581">
    <property type="expression patterns" value="Expressed in thymus and 5 other cell types or tissues"/>
</dbReference>
<dbReference type="ExpressionAtlas" id="P0C6B3">
    <property type="expression patterns" value="baseline and differential"/>
</dbReference>
<dbReference type="GO" id="GO:0005886">
    <property type="term" value="C:plasma membrane"/>
    <property type="evidence" value="ECO:0000250"/>
    <property type="project" value="UniProtKB"/>
</dbReference>
<dbReference type="GO" id="GO:0046632">
    <property type="term" value="P:alpha-beta T cell differentiation"/>
    <property type="evidence" value="ECO:0000250"/>
    <property type="project" value="UniProtKB"/>
</dbReference>
<dbReference type="GO" id="GO:0070244">
    <property type="term" value="P:negative regulation of thymocyte apoptotic process"/>
    <property type="evidence" value="ECO:0000266"/>
    <property type="project" value="RGD"/>
</dbReference>
<dbReference type="GO" id="GO:0070242">
    <property type="term" value="P:thymocyte apoptotic process"/>
    <property type="evidence" value="ECO:0000266"/>
    <property type="project" value="RGD"/>
</dbReference>
<dbReference type="FunFam" id="2.60.40.10:FF:001091">
    <property type="entry name" value="Pre T-cell antigen receptor alpha"/>
    <property type="match status" value="1"/>
</dbReference>
<dbReference type="Gene3D" id="2.60.40.10">
    <property type="entry name" value="Immunoglobulins"/>
    <property type="match status" value="1"/>
</dbReference>
<dbReference type="InterPro" id="IPR036179">
    <property type="entry name" value="Ig-like_dom_sf"/>
</dbReference>
<dbReference type="InterPro" id="IPR013783">
    <property type="entry name" value="Ig-like_fold"/>
</dbReference>
<dbReference type="InterPro" id="IPR027834">
    <property type="entry name" value="PTCRA"/>
</dbReference>
<dbReference type="PANTHER" id="PTHR37866">
    <property type="entry name" value="PRE T-CELL ANTIGEN RECEPTOR ALPHA"/>
    <property type="match status" value="1"/>
</dbReference>
<dbReference type="PANTHER" id="PTHR37866:SF1">
    <property type="entry name" value="PRE T-CELL ANTIGEN RECEPTOR ALPHA"/>
    <property type="match status" value="1"/>
</dbReference>
<dbReference type="Pfam" id="PF15028">
    <property type="entry name" value="PTCRA"/>
    <property type="match status" value="1"/>
</dbReference>
<dbReference type="SUPFAM" id="SSF48726">
    <property type="entry name" value="Immunoglobulin"/>
    <property type="match status" value="1"/>
</dbReference>
<sequence>MARTWLLLFLGLRCQALPSGIAGTPFPSLAPPVTLLVDGRRHTLVVCLVLDAAPPGLDSLVWFSGGNGSALDAFTYGPSPAPDGTWTSLGQLSLSSEELEAWEPLVCHTRPAAGGLNRSTHPLQLSGEEASTDRTCPQETLRGTQRQVLRLSVLRLLLFKLLLLDVFLTCSRLCVLAGQHLLPPPSSKQAPASTHQSWT</sequence>
<protein>
    <recommendedName>
        <fullName evidence="7">Pre T-cell antigen receptor alpha</fullName>
        <shortName>pT-alpha</shortName>
        <shortName>pTa</shortName>
    </recommendedName>
    <alternativeName>
        <fullName>pT-alpha-TCR</fullName>
    </alternativeName>
</protein>
<evidence type="ECO:0000250" key="1"/>
<evidence type="ECO:0000250" key="2">
    <source>
        <dbReference type="UniProtKB" id="Q6ISU1"/>
    </source>
</evidence>
<evidence type="ECO:0000255" key="3"/>
<evidence type="ECO:0000256" key="4">
    <source>
        <dbReference type="SAM" id="MobiDB-lite"/>
    </source>
</evidence>
<evidence type="ECO:0000269" key="5">
    <source>
    </source>
</evidence>
<evidence type="ECO:0000305" key="6"/>
<evidence type="ECO:0000312" key="7">
    <source>
        <dbReference type="RGD" id="621388"/>
    </source>
</evidence>
<reference key="1">
    <citation type="submission" date="2005-07" db="EMBL/GenBank/DDBJ databases">
        <authorList>
            <person name="Mural R.J."/>
            <person name="Adams M.D."/>
            <person name="Myers E.W."/>
            <person name="Smith H.O."/>
            <person name="Venter J.C."/>
        </authorList>
    </citation>
    <scope>NUCLEOTIDE SEQUENCE [LARGE SCALE GENOMIC DNA]</scope>
    <source>
        <strain>Brown Norway</strain>
    </source>
</reference>
<reference key="2">
    <citation type="journal article" date="2000" name="Eur. J. Immunol.">
        <title>Early T cell development can be traced in rat fetal liver.</title>
        <authorList>
            <person name="Alonso-C L.M."/>
            <person name="Munoz J.J."/>
            <person name="Zapata A.G."/>
        </authorList>
    </citation>
    <scope>NUCLEOTIDE SEQUENCE [MRNA] OF 59-164</scope>
    <scope>TISSUE SPECIFICITY</scope>
    <source>
        <strain>Wistar</strain>
        <tissue>Thymocyte</tissue>
    </source>
</reference>
<gene>
    <name evidence="7" type="primary">Ptcra</name>
</gene>
<name>PTCRA_RAT</name>
<proteinExistence type="evidence at transcript level"/>